<gene>
    <name evidence="1" type="primary">thiG</name>
    <name type="ordered locus">SGR_5392</name>
</gene>
<reference key="1">
    <citation type="journal article" date="2008" name="J. Bacteriol.">
        <title>Genome sequence of the streptomycin-producing microorganism Streptomyces griseus IFO 13350.</title>
        <authorList>
            <person name="Ohnishi Y."/>
            <person name="Ishikawa J."/>
            <person name="Hara H."/>
            <person name="Suzuki H."/>
            <person name="Ikenoya M."/>
            <person name="Ikeda H."/>
            <person name="Yamashita A."/>
            <person name="Hattori M."/>
            <person name="Horinouchi S."/>
        </authorList>
    </citation>
    <scope>NUCLEOTIDE SEQUENCE [LARGE SCALE GENOMIC DNA]</scope>
    <source>
        <strain>JCM 4626 / CBS 651.72 / NBRC 13350 / KCC S-0626 / ISP 5235</strain>
    </source>
</reference>
<protein>
    <recommendedName>
        <fullName evidence="1">Thiazole synthase</fullName>
        <ecNumber evidence="1">2.8.1.10</ecNumber>
    </recommendedName>
</protein>
<evidence type="ECO:0000255" key="1">
    <source>
        <dbReference type="HAMAP-Rule" id="MF_00443"/>
    </source>
</evidence>
<sequence length="264" mass="27605">MSDDVFTLGPAAFGSRLIMGTGGAPSLEVLERSLIASGTELTTVAMRRLDPTVQGSVLSVLERLSIRVLPNTAGCFTAGEAVLTARLAREALGTDWVKLEVVADERTLLPDPIELLDAAEVLVDDGFTVLPYTNDDPVLARKLEDVGCAAIMPLGSPIGSGLGIRNPHNFELIVERAGVPVILDAGAGTASDAAQAMELGCAAVMLASAVTRAQEPELMAGAMRHAVEGGRLAYRAGRIPRRHFAEASSPVAGRAVLDPERPAF</sequence>
<accession>B1VZU6</accession>
<dbReference type="EC" id="2.8.1.10" evidence="1"/>
<dbReference type="EMBL" id="AP009493">
    <property type="protein sequence ID" value="BAG22221.1"/>
    <property type="molecule type" value="Genomic_DNA"/>
</dbReference>
<dbReference type="RefSeq" id="WP_003969671.1">
    <property type="nucleotide sequence ID" value="NC_010572.1"/>
</dbReference>
<dbReference type="SMR" id="B1VZU6"/>
<dbReference type="KEGG" id="sgr:SGR_5392"/>
<dbReference type="eggNOG" id="COG2022">
    <property type="taxonomic scope" value="Bacteria"/>
</dbReference>
<dbReference type="HOGENOM" id="CLU_062233_1_0_11"/>
<dbReference type="UniPathway" id="UPA00060"/>
<dbReference type="Proteomes" id="UP000001685">
    <property type="component" value="Chromosome"/>
</dbReference>
<dbReference type="GO" id="GO:0005737">
    <property type="term" value="C:cytoplasm"/>
    <property type="evidence" value="ECO:0007669"/>
    <property type="project" value="UniProtKB-SubCell"/>
</dbReference>
<dbReference type="GO" id="GO:1990107">
    <property type="term" value="F:thiazole synthase activity"/>
    <property type="evidence" value="ECO:0007669"/>
    <property type="project" value="UniProtKB-EC"/>
</dbReference>
<dbReference type="GO" id="GO:0009229">
    <property type="term" value="P:thiamine diphosphate biosynthetic process"/>
    <property type="evidence" value="ECO:0007669"/>
    <property type="project" value="UniProtKB-UniRule"/>
</dbReference>
<dbReference type="CDD" id="cd04728">
    <property type="entry name" value="ThiG"/>
    <property type="match status" value="1"/>
</dbReference>
<dbReference type="Gene3D" id="3.20.20.70">
    <property type="entry name" value="Aldolase class I"/>
    <property type="match status" value="1"/>
</dbReference>
<dbReference type="HAMAP" id="MF_00443">
    <property type="entry name" value="ThiG"/>
    <property type="match status" value="1"/>
</dbReference>
<dbReference type="InterPro" id="IPR013785">
    <property type="entry name" value="Aldolase_TIM"/>
</dbReference>
<dbReference type="InterPro" id="IPR033983">
    <property type="entry name" value="Thiazole_synthase_ThiG"/>
</dbReference>
<dbReference type="InterPro" id="IPR008867">
    <property type="entry name" value="ThiG"/>
</dbReference>
<dbReference type="PANTHER" id="PTHR34266">
    <property type="entry name" value="THIAZOLE SYNTHASE"/>
    <property type="match status" value="1"/>
</dbReference>
<dbReference type="PANTHER" id="PTHR34266:SF2">
    <property type="entry name" value="THIAZOLE SYNTHASE"/>
    <property type="match status" value="1"/>
</dbReference>
<dbReference type="Pfam" id="PF05690">
    <property type="entry name" value="ThiG"/>
    <property type="match status" value="1"/>
</dbReference>
<dbReference type="SUPFAM" id="SSF110399">
    <property type="entry name" value="ThiG-like"/>
    <property type="match status" value="1"/>
</dbReference>
<proteinExistence type="inferred from homology"/>
<organism>
    <name type="scientific">Streptomyces griseus subsp. griseus (strain JCM 4626 / CBS 651.72 / NBRC 13350 / KCC S-0626 / ISP 5235)</name>
    <dbReference type="NCBI Taxonomy" id="455632"/>
    <lineage>
        <taxon>Bacteria</taxon>
        <taxon>Bacillati</taxon>
        <taxon>Actinomycetota</taxon>
        <taxon>Actinomycetes</taxon>
        <taxon>Kitasatosporales</taxon>
        <taxon>Streptomycetaceae</taxon>
        <taxon>Streptomyces</taxon>
    </lineage>
</organism>
<comment type="function">
    <text evidence="1">Catalyzes the rearrangement of 1-deoxy-D-xylulose 5-phosphate (DXP) to produce the thiazole phosphate moiety of thiamine. Sulfur is provided by the thiocarboxylate moiety of the carrier protein ThiS. In vitro, sulfur can be provided by H(2)S.</text>
</comment>
<comment type="catalytic activity">
    <reaction evidence="1">
        <text>[ThiS sulfur-carrier protein]-C-terminal-Gly-aminoethanethioate + 2-iminoacetate + 1-deoxy-D-xylulose 5-phosphate = [ThiS sulfur-carrier protein]-C-terminal Gly-Gly + 2-[(2R,5Z)-2-carboxy-4-methylthiazol-5(2H)-ylidene]ethyl phosphate + 2 H2O + H(+)</text>
        <dbReference type="Rhea" id="RHEA:26297"/>
        <dbReference type="Rhea" id="RHEA-COMP:12909"/>
        <dbReference type="Rhea" id="RHEA-COMP:19908"/>
        <dbReference type="ChEBI" id="CHEBI:15377"/>
        <dbReference type="ChEBI" id="CHEBI:15378"/>
        <dbReference type="ChEBI" id="CHEBI:57792"/>
        <dbReference type="ChEBI" id="CHEBI:62899"/>
        <dbReference type="ChEBI" id="CHEBI:77846"/>
        <dbReference type="ChEBI" id="CHEBI:90778"/>
        <dbReference type="ChEBI" id="CHEBI:232372"/>
        <dbReference type="EC" id="2.8.1.10"/>
    </reaction>
</comment>
<comment type="pathway">
    <text evidence="1">Cofactor biosynthesis; thiamine diphosphate biosynthesis.</text>
</comment>
<comment type="subunit">
    <text evidence="1">Homotetramer. Forms heterodimers with either ThiH or ThiS.</text>
</comment>
<comment type="subcellular location">
    <subcellularLocation>
        <location evidence="1">Cytoplasm</location>
    </subcellularLocation>
</comment>
<comment type="similarity">
    <text evidence="1">Belongs to the ThiG family.</text>
</comment>
<feature type="chain" id="PRO_1000196907" description="Thiazole synthase">
    <location>
        <begin position="1"/>
        <end position="264"/>
    </location>
</feature>
<feature type="active site" description="Schiff-base intermediate with DXP" evidence="1">
    <location>
        <position position="98"/>
    </location>
</feature>
<feature type="binding site" evidence="1">
    <location>
        <position position="159"/>
    </location>
    <ligand>
        <name>1-deoxy-D-xylulose 5-phosphate</name>
        <dbReference type="ChEBI" id="CHEBI:57792"/>
    </ligand>
</feature>
<feature type="binding site" evidence="1">
    <location>
        <begin position="185"/>
        <end position="186"/>
    </location>
    <ligand>
        <name>1-deoxy-D-xylulose 5-phosphate</name>
        <dbReference type="ChEBI" id="CHEBI:57792"/>
    </ligand>
</feature>
<feature type="binding site" evidence="1">
    <location>
        <begin position="207"/>
        <end position="208"/>
    </location>
    <ligand>
        <name>1-deoxy-D-xylulose 5-phosphate</name>
        <dbReference type="ChEBI" id="CHEBI:57792"/>
    </ligand>
</feature>
<name>THIG_STRGG</name>
<keyword id="KW-0963">Cytoplasm</keyword>
<keyword id="KW-0704">Schiff base</keyword>
<keyword id="KW-0784">Thiamine biosynthesis</keyword>
<keyword id="KW-0808">Transferase</keyword>